<reference key="1">
    <citation type="journal article" date="1998" name="DNA Res.">
        <title>An 8 kb nucleotide sequence at the 3' flanking region of the sspC gene (184 degrees) on the Bacillus subtilis 168 chromosome containing an intein and an intron.</title>
        <authorList>
            <person name="Ghim S.-Y."/>
            <person name="Choi S.-K."/>
            <person name="Shin B.-S."/>
            <person name="Park S.-H."/>
        </authorList>
    </citation>
    <scope>NUCLEOTIDE SEQUENCE [GENOMIC DNA]</scope>
    <source>
        <strain>168</strain>
    </source>
</reference>
<reference key="2">
    <citation type="journal article" date="1997" name="Nature">
        <title>The complete genome sequence of the Gram-positive bacterium Bacillus subtilis.</title>
        <authorList>
            <person name="Kunst F."/>
            <person name="Ogasawara N."/>
            <person name="Moszer I."/>
            <person name="Albertini A.M."/>
            <person name="Alloni G."/>
            <person name="Azevedo V."/>
            <person name="Bertero M.G."/>
            <person name="Bessieres P."/>
            <person name="Bolotin A."/>
            <person name="Borchert S."/>
            <person name="Borriss R."/>
            <person name="Boursier L."/>
            <person name="Brans A."/>
            <person name="Braun M."/>
            <person name="Brignell S.C."/>
            <person name="Bron S."/>
            <person name="Brouillet S."/>
            <person name="Bruschi C.V."/>
            <person name="Caldwell B."/>
            <person name="Capuano V."/>
            <person name="Carter N.M."/>
            <person name="Choi S.-K."/>
            <person name="Codani J.-J."/>
            <person name="Connerton I.F."/>
            <person name="Cummings N.J."/>
            <person name="Daniel R.A."/>
            <person name="Denizot F."/>
            <person name="Devine K.M."/>
            <person name="Duesterhoeft A."/>
            <person name="Ehrlich S.D."/>
            <person name="Emmerson P.T."/>
            <person name="Entian K.-D."/>
            <person name="Errington J."/>
            <person name="Fabret C."/>
            <person name="Ferrari E."/>
            <person name="Foulger D."/>
            <person name="Fritz C."/>
            <person name="Fujita M."/>
            <person name="Fujita Y."/>
            <person name="Fuma S."/>
            <person name="Galizzi A."/>
            <person name="Galleron N."/>
            <person name="Ghim S.-Y."/>
            <person name="Glaser P."/>
            <person name="Goffeau A."/>
            <person name="Golightly E.J."/>
            <person name="Grandi G."/>
            <person name="Guiseppi G."/>
            <person name="Guy B.J."/>
            <person name="Haga K."/>
            <person name="Haiech J."/>
            <person name="Harwood C.R."/>
            <person name="Henaut A."/>
            <person name="Hilbert H."/>
            <person name="Holsappel S."/>
            <person name="Hosono S."/>
            <person name="Hullo M.-F."/>
            <person name="Itaya M."/>
            <person name="Jones L.-M."/>
            <person name="Joris B."/>
            <person name="Karamata D."/>
            <person name="Kasahara Y."/>
            <person name="Klaerr-Blanchard M."/>
            <person name="Klein C."/>
            <person name="Kobayashi Y."/>
            <person name="Koetter P."/>
            <person name="Koningstein G."/>
            <person name="Krogh S."/>
            <person name="Kumano M."/>
            <person name="Kurita K."/>
            <person name="Lapidus A."/>
            <person name="Lardinois S."/>
            <person name="Lauber J."/>
            <person name="Lazarevic V."/>
            <person name="Lee S.-M."/>
            <person name="Levine A."/>
            <person name="Liu H."/>
            <person name="Masuda S."/>
            <person name="Mauel C."/>
            <person name="Medigue C."/>
            <person name="Medina N."/>
            <person name="Mellado R.P."/>
            <person name="Mizuno M."/>
            <person name="Moestl D."/>
            <person name="Nakai S."/>
            <person name="Noback M."/>
            <person name="Noone D."/>
            <person name="O'Reilly M."/>
            <person name="Ogawa K."/>
            <person name="Ogiwara A."/>
            <person name="Oudega B."/>
            <person name="Park S.-H."/>
            <person name="Parro V."/>
            <person name="Pohl T.M."/>
            <person name="Portetelle D."/>
            <person name="Porwollik S."/>
            <person name="Prescott A.M."/>
            <person name="Presecan E."/>
            <person name="Pujic P."/>
            <person name="Purnelle B."/>
            <person name="Rapoport G."/>
            <person name="Rey M."/>
            <person name="Reynolds S."/>
            <person name="Rieger M."/>
            <person name="Rivolta C."/>
            <person name="Rocha E."/>
            <person name="Roche B."/>
            <person name="Rose M."/>
            <person name="Sadaie Y."/>
            <person name="Sato T."/>
            <person name="Scanlan E."/>
            <person name="Schleich S."/>
            <person name="Schroeter R."/>
            <person name="Scoffone F."/>
            <person name="Sekiguchi J."/>
            <person name="Sekowska A."/>
            <person name="Seror S.J."/>
            <person name="Serror P."/>
            <person name="Shin B.-S."/>
            <person name="Soldo B."/>
            <person name="Sorokin A."/>
            <person name="Tacconi E."/>
            <person name="Takagi T."/>
            <person name="Takahashi H."/>
            <person name="Takemaru K."/>
            <person name="Takeuchi M."/>
            <person name="Tamakoshi A."/>
            <person name="Tanaka T."/>
            <person name="Terpstra P."/>
            <person name="Tognoni A."/>
            <person name="Tosato V."/>
            <person name="Uchiyama S."/>
            <person name="Vandenbol M."/>
            <person name="Vannier F."/>
            <person name="Vassarotti A."/>
            <person name="Viari A."/>
            <person name="Wambutt R."/>
            <person name="Wedler E."/>
            <person name="Wedler H."/>
            <person name="Weitzenegger T."/>
            <person name="Winters P."/>
            <person name="Wipat A."/>
            <person name="Yamamoto H."/>
            <person name="Yamane K."/>
            <person name="Yasumoto K."/>
            <person name="Yata K."/>
            <person name="Yoshida K."/>
            <person name="Yoshikawa H.-F."/>
            <person name="Zumstein E."/>
            <person name="Yoshikawa H."/>
            <person name="Danchin A."/>
        </authorList>
    </citation>
    <scope>NUCLEOTIDE SEQUENCE [LARGE SCALE GENOMIC DNA]</scope>
    <source>
        <strain>168</strain>
    </source>
</reference>
<name>YOSV_BACSU</name>
<dbReference type="EMBL" id="AF012906">
    <property type="protein sequence ID" value="AAB92491.1"/>
    <property type="molecule type" value="Genomic_DNA"/>
</dbReference>
<dbReference type="EMBL" id="AL009126">
    <property type="protein sequence ID" value="CAB13890.1"/>
    <property type="molecule type" value="Genomic_DNA"/>
</dbReference>
<dbReference type="RefSeq" id="NP_389880.1">
    <property type="nucleotide sequence ID" value="NC_000964.3"/>
</dbReference>
<dbReference type="RefSeq" id="WP_004399449.1">
    <property type="nucleotide sequence ID" value="NZ_OZ025638.1"/>
</dbReference>
<dbReference type="SMR" id="O34537"/>
<dbReference type="FunCoup" id="O34537">
    <property type="interactions" value="54"/>
</dbReference>
<dbReference type="STRING" id="224308.BSU19990"/>
<dbReference type="PaxDb" id="224308-BSU19990"/>
<dbReference type="EnsemblBacteria" id="CAB13890">
    <property type="protein sequence ID" value="CAB13890"/>
    <property type="gene ID" value="BSU_19990"/>
</dbReference>
<dbReference type="GeneID" id="939523"/>
<dbReference type="KEGG" id="bsu:BSU19990"/>
<dbReference type="PATRIC" id="fig|224308.179.peg.2186"/>
<dbReference type="InParanoid" id="O34537"/>
<dbReference type="OrthoDB" id="2902514at2"/>
<dbReference type="BioCyc" id="BSUB:BSU19990-MONOMER"/>
<dbReference type="Proteomes" id="UP000001570">
    <property type="component" value="Chromosome"/>
</dbReference>
<keyword id="KW-1185">Reference proteome</keyword>
<sequence length="96" mass="10961">MFKDKNKIIKSVEKINKLEEGLSLFEEGDEEYLSVLVKIQGLYDEISDTALECFKEMTTKIRKTGQKRIIKGIDQLPHTIKENIADQVNDFKGGAI</sequence>
<accession>O34537</accession>
<accession>Q7BVQ3</accession>
<proteinExistence type="predicted"/>
<protein>
    <recommendedName>
        <fullName>SPbeta prophage-derived uncharacterized protein YosV</fullName>
    </recommendedName>
</protein>
<organism>
    <name type="scientific">Bacillus subtilis (strain 168)</name>
    <dbReference type="NCBI Taxonomy" id="224308"/>
    <lineage>
        <taxon>Bacteria</taxon>
        <taxon>Bacillati</taxon>
        <taxon>Bacillota</taxon>
        <taxon>Bacilli</taxon>
        <taxon>Bacillales</taxon>
        <taxon>Bacillaceae</taxon>
        <taxon>Bacillus</taxon>
    </lineage>
</organism>
<gene>
    <name type="primary">yosV</name>
    <name type="synonym">yojX</name>
    <name type="ordered locus">BSU19990</name>
</gene>
<feature type="chain" id="PRO_0000360743" description="SPbeta prophage-derived uncharacterized protein YosV">
    <location>
        <begin position="1"/>
        <end position="96"/>
    </location>
</feature>